<reference key="1">
    <citation type="journal article" date="1988" name="Cell">
        <title>Regulated expression of a gene encoding a nuclear factor, IRF-1, that specifically binds to IFN-beta gene regulatory elements.</title>
        <authorList>
            <person name="Miyamoto M."/>
            <person name="Fujita T."/>
            <person name="Kimura Y."/>
            <person name="Maruyama M."/>
            <person name="Harada H."/>
            <person name="Sudo Y."/>
            <person name="Miyata T."/>
            <person name="Taniguchi T."/>
        </authorList>
    </citation>
    <scope>NUCLEOTIDE SEQUENCE [MRNA]</scope>
</reference>
<reference key="2">
    <citation type="journal article" date="2004" name="Genome Res.">
        <title>The status, quality, and expansion of the NIH full-length cDNA project: the Mammalian Gene Collection (MGC).</title>
        <authorList>
            <consortium name="The MGC Project Team"/>
        </authorList>
    </citation>
    <scope>NUCLEOTIDE SEQUENCE [LARGE SCALE MRNA]</scope>
    <source>
        <strain>FVB/N</strain>
        <tissue>Mammary gland</tissue>
    </source>
</reference>
<reference key="3">
    <citation type="journal article" date="2000" name="Eur. J. Biochem.">
        <title>Degradation of transcription factor IRF-1 by the ubiquitin-proteasome pathway. The C-terminal region governs the protein stability.</title>
        <authorList>
            <person name="Nakagawa K."/>
            <person name="Yokosawa H."/>
        </authorList>
    </citation>
    <scope>UBIQUITINATION</scope>
</reference>
<reference key="4">
    <citation type="journal article" date="2001" name="Annu. Rev. Immunol.">
        <title>IRF family of transcription factors as regulators of host defense.</title>
        <authorList>
            <person name="Taniguchi T."/>
            <person name="Ogasawara K."/>
            <person name="Takaoka A."/>
            <person name="Tanaka N."/>
        </authorList>
    </citation>
    <scope>REVIEW ON FUNCTION</scope>
</reference>
<reference key="5">
    <citation type="journal article" date="2002" name="FEBS Lett.">
        <title>PIAS3 induces SUMO-1 modification and transcriptional repression of IRF-1.</title>
        <authorList>
            <person name="Nakagawa K."/>
            <person name="Yokosawa H."/>
        </authorList>
    </citation>
    <scope>INTERACTION WITH PIAS3</scope>
    <scope>SUMOYLATION</scope>
    <scope>FUNCTION</scope>
</reference>
<reference key="6">
    <citation type="journal article" date="2002" name="J. Interferon Cytokine Res.">
        <title>Activities of IRF-1.</title>
        <authorList>
            <person name="Kroeger A."/>
            <person name="Koester M."/>
            <person name="Schroeder K."/>
            <person name="Hauser H."/>
            <person name="Mueller P.P."/>
        </authorList>
    </citation>
    <scope>REVIEW ON FUNCTION</scope>
</reference>
<reference key="7">
    <citation type="journal article" date="2002" name="J. Interferon Cytokine Res.">
        <title>IRF-1 as a negative regulator of cell proliferation.</title>
        <authorList>
            <person name="Romeo G."/>
            <person name="Fiorucci G."/>
            <person name="Chiantore M.V."/>
            <person name="Percario Z.A."/>
            <person name="Vannucchi S."/>
            <person name="Affabris E."/>
        </authorList>
    </citation>
    <scope>REVIEW ON FUNCTION</scope>
</reference>
<reference key="8">
    <citation type="journal article" date="2006" name="Nat. Rev. Immunol.">
        <title>IRFs: master regulators of signalling by Toll-like receptors and cytosolic pattern-recognition receptors.</title>
        <authorList>
            <person name="Honda K."/>
            <person name="Taniguchi T."/>
        </authorList>
    </citation>
    <scope>REVIEW ON FUNCTION</scope>
</reference>
<reference key="9">
    <citation type="journal article" date="2006" name="Proc. Natl. Acad. Sci. U.S.A.">
        <title>Evidence for licensing of IFN-gamma-induced IFN regulatory factor 1 transcription factor by MyD88 in Toll-like receptor-dependent gene induction program.</title>
        <authorList>
            <person name="Negishi H."/>
            <person name="Fujita Y."/>
            <person name="Yanai H."/>
            <person name="Sakaguchi S."/>
            <person name="Ouyang X."/>
            <person name="Shinohara M."/>
            <person name="Takayanagi H."/>
            <person name="Ohba Y."/>
            <person name="Taniguchi T."/>
            <person name="Honda K."/>
        </authorList>
    </citation>
    <scope>FUNCTION</scope>
    <scope>ACTIVITY REGULATION</scope>
    <scope>SUBCELLULAR LOCATION</scope>
    <scope>INTERACTION WITH MYD88</scope>
    <scope>INDUCTION BY IFN-GAMMA</scope>
</reference>
<reference key="10">
    <citation type="journal article" date="2008" name="Biochem. Biophys. Res. Commun.">
        <title>Ubc9-mediated sumoylation leads to transcriptional repression of IRF-1.</title>
        <authorList>
            <person name="Kim E.-J."/>
            <person name="Park J.-S."/>
            <person name="Um S.-J."/>
        </authorList>
    </citation>
    <scope>FUNCTION</scope>
    <scope>INDUCTION BY IFN-GAMMA</scope>
    <scope>SUMOYLATION</scope>
</reference>
<reference key="11">
    <citation type="journal article" date="2008" name="J. Immunol.">
        <title>IFN regulatory factor-1 negatively regulates CD4+ CD25+ regulatory T cell differentiation by repressing Foxp3 expression.</title>
        <authorList>
            <person name="Fragale A."/>
            <person name="Gabriele L."/>
            <person name="Stellacci E."/>
            <person name="Borghi P."/>
            <person name="Perrotti E."/>
            <person name="Ilari R."/>
            <person name="Lanciotti A."/>
            <person name="Remoli A.L."/>
            <person name="Venditti M."/>
            <person name="Belardelli F."/>
            <person name="Battistini A."/>
        </authorList>
    </citation>
    <scope>FUNCTION</scope>
</reference>
<reference key="12">
    <citation type="journal article" date="2010" name="Cancer Immunol. Immunother.">
        <title>Regulation of immunity and oncogenesis by the IRF transcription factor family.</title>
        <authorList>
            <person name="Savitsky D."/>
            <person name="Tamura T."/>
            <person name="Yanai H."/>
            <person name="Taniguchi T."/>
        </authorList>
    </citation>
    <scope>REVIEW ON FUNCTION</scope>
</reference>
<reference key="13">
    <citation type="journal article" date="2010" name="J. Immunol.">
        <title>IFN regulatory factor-1 bypasses IFN-mediated antiviral effects through viperin gene induction.</title>
        <authorList>
            <person name="Stirnweiss A."/>
            <person name="Ksienzyk A."/>
            <person name="Klages K."/>
            <person name="Rand U."/>
            <person name="Grashoff M."/>
            <person name="Hauser H."/>
            <person name="Kroeger A."/>
        </authorList>
    </citation>
    <scope>FUNCTION</scope>
</reference>
<reference key="14">
    <citation type="journal article" date="2011" name="PLoS Pathog.">
        <title>Interferon regulatory factor-1 (IRF-1) shapes both innate and CD8(+) T cell immune responses against West Nile virus infection.</title>
        <authorList>
            <person name="Brien J.D."/>
            <person name="Daffis S."/>
            <person name="Lazear H.M."/>
            <person name="Cho H."/>
            <person name="Suthar M.S."/>
            <person name="Gale M. Jr."/>
            <person name="Diamond M.S."/>
        </authorList>
    </citation>
    <scope>FUNCTION</scope>
</reference>
<reference key="15">
    <citation type="journal article" date="2015" name="Nat. Immunol.">
        <title>The transcription factor IRF1 and guanylate-binding proteins target activation of the AIM2 inflammasome by Francisella infection.</title>
        <authorList>
            <person name="Man S.M."/>
            <person name="Karki R."/>
            <person name="Malireddi R.K."/>
            <person name="Neale G."/>
            <person name="Vogel P."/>
            <person name="Yamamoto M."/>
            <person name="Lamkanfi M."/>
            <person name="Kanneganti T.D."/>
        </authorList>
    </citation>
    <scope>FUNCTION</scope>
</reference>
<reference key="16">
    <citation type="journal article" date="2016" name="Cell">
        <title>IRGB10 liberates bacterial ligands for sensing by the AIM2 and caspase-11-NLRP3 inflammasomes.</title>
        <authorList>
            <person name="Man S.M."/>
            <person name="Karki R."/>
            <person name="Sasai M."/>
            <person name="Place D.E."/>
            <person name="Kesavardhana S."/>
            <person name="Temirov J."/>
            <person name="Frase S."/>
            <person name="Zhu Q."/>
            <person name="Malireddi R.K.S."/>
            <person name="Kuriakose T."/>
            <person name="Peters J.L."/>
            <person name="Neale G."/>
            <person name="Brown S.A."/>
            <person name="Yamamoto M."/>
            <person name="Kanneganti T.D."/>
        </authorList>
    </citation>
    <scope>FUNCTION</scope>
</reference>
<reference key="17">
    <citation type="journal article" date="2018" name="J. Immunol.">
        <title>IRF1 is a transcriptional regulator of ZBP1 promoting NLRP3 inflammasome activation and cell death during influenza virus infection.</title>
        <authorList>
            <person name="Kuriakose T."/>
            <person name="Zheng M."/>
            <person name="Neale G."/>
            <person name="Kanneganti T.D."/>
        </authorList>
    </citation>
    <scope>FUNCTION</scope>
    <scope>INDUCTION BY IFN AND INFLUENZA A VIRUS</scope>
</reference>
<reference key="18">
    <citation type="journal article" date="2019" name="Immunity">
        <title>The nucleotide sensor ZBP1 and kinase RIPK3 induce the enzyme IRG1 to promote an antiviral metabolic state in neurons.</title>
        <authorList>
            <person name="Daniels B.P."/>
            <person name="Kofman S.B."/>
            <person name="Smith J.R."/>
            <person name="Norris G.T."/>
            <person name="Snyder A.G."/>
            <person name="Kolb J.P."/>
            <person name="Gao X."/>
            <person name="Locasale J.W."/>
            <person name="Martinez J."/>
            <person name="Gale M. Jr."/>
            <person name="Loo Y.M."/>
            <person name="Oberst A."/>
        </authorList>
    </citation>
    <scope>FUNCTION</scope>
    <scope>SUBCELLULAR LOCATION</scope>
</reference>
<reference key="19">
    <citation type="journal article" date="1998" name="Nature">
        <title>Structure of IRF-1 with bound DNA reveals determinants of interferon regulation.</title>
        <authorList>
            <person name="Escalante C.R."/>
            <person name="Yie J."/>
            <person name="Thanos D."/>
            <person name="Aggarwal A.K."/>
        </authorList>
    </citation>
    <scope>X-RAY CRYSTALLOGRAPHY (3.0 ANGSTROMS) OF 7-111</scope>
    <scope>SUBUNIT</scope>
</reference>
<dbReference type="EMBL" id="M21065">
    <property type="protein sequence ID" value="AAA39334.1"/>
    <property type="molecule type" value="mRNA"/>
</dbReference>
<dbReference type="EMBL" id="BC003821">
    <property type="protein sequence ID" value="AAH03821.1"/>
    <property type="molecule type" value="mRNA"/>
</dbReference>
<dbReference type="CCDS" id="CCDS24686.1"/>
<dbReference type="PIR" id="A31595">
    <property type="entry name" value="A31595"/>
</dbReference>
<dbReference type="RefSeq" id="NP_001152868.1">
    <property type="nucleotide sequence ID" value="NM_001159396.1"/>
</dbReference>
<dbReference type="RefSeq" id="NP_032416.1">
    <property type="nucleotide sequence ID" value="NM_008390.2"/>
</dbReference>
<dbReference type="PDB" id="1IF1">
    <property type="method" value="X-ray"/>
    <property type="resolution" value="3.00 A"/>
    <property type="chains" value="A/B=1-113"/>
</dbReference>
<dbReference type="PDBsum" id="1IF1"/>
<dbReference type="SMR" id="P15314"/>
<dbReference type="BioGRID" id="200784">
    <property type="interactions" value="7"/>
</dbReference>
<dbReference type="CORUM" id="P15314"/>
<dbReference type="DIP" id="DIP-61281N"/>
<dbReference type="FunCoup" id="P15314">
    <property type="interactions" value="2116"/>
</dbReference>
<dbReference type="IntAct" id="P15314">
    <property type="interactions" value="6"/>
</dbReference>
<dbReference type="STRING" id="10090.ENSMUSP00000104548"/>
<dbReference type="iPTMnet" id="P15314"/>
<dbReference type="PhosphoSitePlus" id="P15314"/>
<dbReference type="PaxDb" id="10090-ENSMUSP00000104548"/>
<dbReference type="ProteomicsDB" id="267152"/>
<dbReference type="Antibodypedia" id="3180">
    <property type="antibodies" value="483 antibodies from 37 providers"/>
</dbReference>
<dbReference type="DNASU" id="16362"/>
<dbReference type="Ensembl" id="ENSMUST00000019043.13">
    <property type="protein sequence ID" value="ENSMUSP00000019043.7"/>
    <property type="gene ID" value="ENSMUSG00000018899.18"/>
</dbReference>
<dbReference type="Ensembl" id="ENSMUST00000108920.10">
    <property type="protein sequence ID" value="ENSMUSP00000104548.3"/>
    <property type="gene ID" value="ENSMUSG00000018899.18"/>
</dbReference>
<dbReference type="GeneID" id="16362"/>
<dbReference type="KEGG" id="mmu:16362"/>
<dbReference type="UCSC" id="uc007iww.2">
    <property type="organism name" value="mouse"/>
</dbReference>
<dbReference type="AGR" id="MGI:96590"/>
<dbReference type="CTD" id="3659"/>
<dbReference type="MGI" id="MGI:96590">
    <property type="gene designation" value="Irf1"/>
</dbReference>
<dbReference type="VEuPathDB" id="HostDB:ENSMUSG00000018899"/>
<dbReference type="eggNOG" id="ENOG502QVVN">
    <property type="taxonomic scope" value="Eukaryota"/>
</dbReference>
<dbReference type="GeneTree" id="ENSGT00940000156288"/>
<dbReference type="HOGENOM" id="CLU_056386_1_0_1"/>
<dbReference type="InParanoid" id="P15314"/>
<dbReference type="OMA" id="HSGYTIH"/>
<dbReference type="OrthoDB" id="6538197at2759"/>
<dbReference type="PhylomeDB" id="P15314"/>
<dbReference type="TreeFam" id="TF328512"/>
<dbReference type="BioGRID-ORCS" id="16362">
    <property type="hits" value="23 hits in 85 CRISPR screens"/>
</dbReference>
<dbReference type="ChiTaRS" id="Irf1">
    <property type="organism name" value="mouse"/>
</dbReference>
<dbReference type="EvolutionaryTrace" id="P15314"/>
<dbReference type="PRO" id="PR:P15314"/>
<dbReference type="Proteomes" id="UP000000589">
    <property type="component" value="Chromosome 11"/>
</dbReference>
<dbReference type="RNAct" id="P15314">
    <property type="molecule type" value="protein"/>
</dbReference>
<dbReference type="Bgee" id="ENSMUSG00000018899">
    <property type="expression patterns" value="Expressed in small intestine Peyer's patch and 259 other cell types or tissues"/>
</dbReference>
<dbReference type="ExpressionAtlas" id="P15314">
    <property type="expression patterns" value="baseline and differential"/>
</dbReference>
<dbReference type="GO" id="GO:0000785">
    <property type="term" value="C:chromatin"/>
    <property type="evidence" value="ECO:0007669"/>
    <property type="project" value="Ensembl"/>
</dbReference>
<dbReference type="GO" id="GO:0005737">
    <property type="term" value="C:cytoplasm"/>
    <property type="evidence" value="ECO:0000314"/>
    <property type="project" value="UniProtKB"/>
</dbReference>
<dbReference type="GO" id="GO:0005634">
    <property type="term" value="C:nucleus"/>
    <property type="evidence" value="ECO:0000314"/>
    <property type="project" value="UniProtKB"/>
</dbReference>
<dbReference type="GO" id="GO:0003677">
    <property type="term" value="F:DNA binding"/>
    <property type="evidence" value="ECO:0000314"/>
    <property type="project" value="MGI"/>
</dbReference>
<dbReference type="GO" id="GO:0001228">
    <property type="term" value="F:DNA-binding transcription activator activity, RNA polymerase II-specific"/>
    <property type="evidence" value="ECO:0007669"/>
    <property type="project" value="Ensembl"/>
</dbReference>
<dbReference type="GO" id="GO:0003700">
    <property type="term" value="F:DNA-binding transcription factor activity"/>
    <property type="evidence" value="ECO:0000314"/>
    <property type="project" value="MGI"/>
</dbReference>
<dbReference type="GO" id="GO:0000981">
    <property type="term" value="F:DNA-binding transcription factor activity, RNA polymerase II-specific"/>
    <property type="evidence" value="ECO:0000314"/>
    <property type="project" value="UniProtKB"/>
</dbReference>
<dbReference type="GO" id="GO:0000978">
    <property type="term" value="F:RNA polymerase II cis-regulatory region sequence-specific DNA binding"/>
    <property type="evidence" value="ECO:0007669"/>
    <property type="project" value="Ensembl"/>
</dbReference>
<dbReference type="GO" id="GO:0043565">
    <property type="term" value="F:sequence-specific DNA binding"/>
    <property type="evidence" value="ECO:0000314"/>
    <property type="project" value="MGI"/>
</dbReference>
<dbReference type="GO" id="GO:0000976">
    <property type="term" value="F:transcription cis-regulatory region binding"/>
    <property type="evidence" value="ECO:0000250"/>
    <property type="project" value="UniProtKB"/>
</dbReference>
<dbReference type="GO" id="GO:0006915">
    <property type="term" value="P:apoptotic process"/>
    <property type="evidence" value="ECO:0000250"/>
    <property type="project" value="UniProtKB"/>
</dbReference>
<dbReference type="GO" id="GO:0043374">
    <property type="term" value="P:CD8-positive, alpha-beta T cell differentiation"/>
    <property type="evidence" value="ECO:0000315"/>
    <property type="project" value="MGI"/>
</dbReference>
<dbReference type="GO" id="GO:0035458">
    <property type="term" value="P:cellular response to interferon-beta"/>
    <property type="evidence" value="ECO:0007669"/>
    <property type="project" value="Ensembl"/>
</dbReference>
<dbReference type="GO" id="GO:0071260">
    <property type="term" value="P:cellular response to mechanical stimulus"/>
    <property type="evidence" value="ECO:0007669"/>
    <property type="project" value="Ensembl"/>
</dbReference>
<dbReference type="GO" id="GO:0051607">
    <property type="term" value="P:defense response to virus"/>
    <property type="evidence" value="ECO:0000315"/>
    <property type="project" value="UniProtKB"/>
</dbReference>
<dbReference type="GO" id="GO:0045892">
    <property type="term" value="P:negative regulation of DNA-templated transcription"/>
    <property type="evidence" value="ECO:0000314"/>
    <property type="project" value="UniProtKB"/>
</dbReference>
<dbReference type="GO" id="GO:0045590">
    <property type="term" value="P:negative regulation of regulatory T cell differentiation"/>
    <property type="evidence" value="ECO:0000315"/>
    <property type="project" value="UniProtKB"/>
</dbReference>
<dbReference type="GO" id="GO:0045629">
    <property type="term" value="P:negative regulation of T-helper 2 cell differentiation"/>
    <property type="evidence" value="ECO:0000304"/>
    <property type="project" value="UniProtKB"/>
</dbReference>
<dbReference type="GO" id="GO:0045893">
    <property type="term" value="P:positive regulation of DNA-templated transcription"/>
    <property type="evidence" value="ECO:0000314"/>
    <property type="project" value="MGI"/>
</dbReference>
<dbReference type="GO" id="GO:0032728">
    <property type="term" value="P:positive regulation of interferon-beta production"/>
    <property type="evidence" value="ECO:0000250"/>
    <property type="project" value="UniProtKB"/>
</dbReference>
<dbReference type="GO" id="GO:0032735">
    <property type="term" value="P:positive regulation of interleukin-12 production"/>
    <property type="evidence" value="ECO:0000314"/>
    <property type="project" value="MGI"/>
</dbReference>
<dbReference type="GO" id="GO:0032825">
    <property type="term" value="P:positive regulation of natural killer cell differentiation"/>
    <property type="evidence" value="ECO:0000304"/>
    <property type="project" value="UniProtKB"/>
</dbReference>
<dbReference type="GO" id="GO:0045627">
    <property type="term" value="P:positive regulation of T-helper 1 cell differentiation"/>
    <property type="evidence" value="ECO:0000304"/>
    <property type="project" value="UniProtKB"/>
</dbReference>
<dbReference type="GO" id="GO:0045944">
    <property type="term" value="P:positive regulation of transcription by RNA polymerase II"/>
    <property type="evidence" value="ECO:0000314"/>
    <property type="project" value="MGI"/>
</dbReference>
<dbReference type="GO" id="GO:0032481">
    <property type="term" value="P:positive regulation of type I interferon production"/>
    <property type="evidence" value="ECO:0000315"/>
    <property type="project" value="UniProtKB"/>
</dbReference>
<dbReference type="GO" id="GO:0002819">
    <property type="term" value="P:regulation of adaptive immune response"/>
    <property type="evidence" value="ECO:0000304"/>
    <property type="project" value="UniProtKB"/>
</dbReference>
<dbReference type="GO" id="GO:2000564">
    <property type="term" value="P:regulation of CD8-positive, alpha-beta T cell proliferation"/>
    <property type="evidence" value="ECO:0000315"/>
    <property type="project" value="UniProtKB"/>
</dbReference>
<dbReference type="GO" id="GO:0051726">
    <property type="term" value="P:regulation of cell cycle"/>
    <property type="evidence" value="ECO:0000250"/>
    <property type="project" value="UniProtKB"/>
</dbReference>
<dbReference type="GO" id="GO:0010468">
    <property type="term" value="P:regulation of gene expression"/>
    <property type="evidence" value="ECO:0000315"/>
    <property type="project" value="MGI"/>
</dbReference>
<dbReference type="GO" id="GO:0045088">
    <property type="term" value="P:regulation of innate immune response"/>
    <property type="evidence" value="ECO:0000304"/>
    <property type="project" value="UniProtKB"/>
</dbReference>
<dbReference type="GO" id="GO:0034124">
    <property type="term" value="P:regulation of MyD88-dependent toll-like receptor signaling pathway"/>
    <property type="evidence" value="ECO:0000315"/>
    <property type="project" value="UniProtKB"/>
</dbReference>
<dbReference type="GO" id="GO:0006357">
    <property type="term" value="P:regulation of transcription by RNA polymerase II"/>
    <property type="evidence" value="ECO:0000266"/>
    <property type="project" value="MGI"/>
</dbReference>
<dbReference type="GO" id="GO:0034138">
    <property type="term" value="P:toll-like receptor 3 signaling pathway"/>
    <property type="evidence" value="ECO:0000266"/>
    <property type="project" value="MGI"/>
</dbReference>
<dbReference type="GO" id="GO:0006366">
    <property type="term" value="P:transcription by RNA polymerase II"/>
    <property type="evidence" value="ECO:0000314"/>
    <property type="project" value="MGI"/>
</dbReference>
<dbReference type="GO" id="GO:0060333">
    <property type="term" value="P:type II interferon-mediated signaling pathway"/>
    <property type="evidence" value="ECO:0000315"/>
    <property type="project" value="UniProtKB"/>
</dbReference>
<dbReference type="CDD" id="cd00103">
    <property type="entry name" value="IRF"/>
    <property type="match status" value="1"/>
</dbReference>
<dbReference type="FunFam" id="1.10.10.10:FF:000065">
    <property type="entry name" value="Interferon regulatory factor"/>
    <property type="match status" value="1"/>
</dbReference>
<dbReference type="Gene3D" id="1.10.10.10">
    <property type="entry name" value="Winged helix-like DNA-binding domain superfamily/Winged helix DNA-binding domain"/>
    <property type="match status" value="1"/>
</dbReference>
<dbReference type="InterPro" id="IPR019817">
    <property type="entry name" value="Interferon_reg_fac_CS"/>
</dbReference>
<dbReference type="InterPro" id="IPR001346">
    <property type="entry name" value="Interferon_reg_fact_DNA-bd_dom"/>
</dbReference>
<dbReference type="InterPro" id="IPR017431">
    <property type="entry name" value="IRF1/IRF2"/>
</dbReference>
<dbReference type="InterPro" id="IPR036388">
    <property type="entry name" value="WH-like_DNA-bd_sf"/>
</dbReference>
<dbReference type="InterPro" id="IPR036390">
    <property type="entry name" value="WH_DNA-bd_sf"/>
</dbReference>
<dbReference type="PANTHER" id="PTHR11949">
    <property type="entry name" value="INTERFERON REGULATORY FACTOR"/>
    <property type="match status" value="1"/>
</dbReference>
<dbReference type="PANTHER" id="PTHR11949:SF3">
    <property type="entry name" value="INTERFERON REGULATORY FACTOR 1"/>
    <property type="match status" value="1"/>
</dbReference>
<dbReference type="Pfam" id="PF00605">
    <property type="entry name" value="IRF"/>
    <property type="match status" value="1"/>
</dbReference>
<dbReference type="PIRSF" id="PIRSF038196">
    <property type="entry name" value="IFN_RF1/2"/>
    <property type="match status" value="1"/>
</dbReference>
<dbReference type="PRINTS" id="PR00267">
    <property type="entry name" value="INTFRNREGFCT"/>
</dbReference>
<dbReference type="SMART" id="SM00348">
    <property type="entry name" value="IRF"/>
    <property type="match status" value="1"/>
</dbReference>
<dbReference type="SUPFAM" id="SSF46785">
    <property type="entry name" value="Winged helix' DNA-binding domain"/>
    <property type="match status" value="1"/>
</dbReference>
<dbReference type="PROSITE" id="PS00601">
    <property type="entry name" value="IRF_1"/>
    <property type="match status" value="1"/>
</dbReference>
<dbReference type="PROSITE" id="PS51507">
    <property type="entry name" value="IRF_2"/>
    <property type="match status" value="1"/>
</dbReference>
<comment type="function">
    <text evidence="2 5 6 7 8 9 10 11 12 13 14 15 16 17 18 19 21 22 23 24 25">Transcriptional regulator which displays a remarkable functional diversity in the regulation of cellular responses (PubMed:11244049, PubMed:11846971, PubMed:11846974, PubMed:16932750, PubMed:20049431, PubMed:25774715). Regulates transcription of IFN and IFN-inducible genes, host response to viral and bacterial infections, regulation of many genes expressed during hematopoiesis, inflammation, immune responses and cell proliferation and differentiation, regulation of the cell cycle and induction of growth arrest and programmed cell death following DNA damage (PubMed:11244049, PubMed:11846971, PubMed:11846974, PubMed:16932750, PubMed:20049431). Stimulates both innate and acquired immune responses through the activation of specific target genes and can act as a transcriptional activator and repressor regulating target genes by binding to an interferon-stimulated response element (ISRE) in their promoters (PubMed:11244049, PubMed:11846971, PubMed:11846974, PubMed:16932750, PubMed:20049431). Has an essentail role in IFNG-dependent immunity to mycobacteria (By similarity). Binds to a consensus sequence in gene promoters (By similarity). Its target genes for transcriptional activation activity are: genes involved in anti-viral response, such as IFN-alpha/beta, RIGI, TNFSF10/TRAIL, ZBP1, OAS1/2, PIAS1/GBP, EIF2AK2/PKR and RSAD2/viperin; antibacterial response, such as GBP2, GBP5, IRGB10 and NOS2/INOS; anti-proliferative response, such as p53/TP53, LOX and CDKN1A; apoptosis, such as BBC3/PUMA, CASP1, CASP7 and CASP8; immune response, such as IL7, IL12A/B and IL15, PTGS2/COX2 and CYBB; DNA damage responses and DNA repair, such as POLQ/POLH; MHC class I expression, such as TAP1, PSMB9/LMP2, PSME1/PA28A, PSME2/PA28B and B2M and MHC class II expression, such as CIITA; metabolic enzymes, such as ACOD1/IRG1 (PubMed:12387893, PubMed:17018642, PubMed:18955028, PubMed:20308629, PubMed:21909274, PubMed:25774715, PubMed:27693356, PubMed:29321274, PubMed:30635240). Represses genes involved in anti-proliferative response, such as BIRC5/survivin, CCNB1, CCNE1, CDK1, CDK2 and CDK4 and in immune response, such as FOXP3, IL4, ANXA2 and TLR4 (PubMed:18641303). Stimulates p53/TP53-dependent transcription through enhanced recruitment of EP300 leading to increased acetylation of p53/TP53 (By similarity). Plays an important role in immune response directly affecting NK maturation and activity, macrophage production of IL12, Th1 development and maturation of CD8+ T-cells (PubMed:11244049, PubMed:11846971, PubMed:11846974, PubMed:16932750, PubMed:20049431). Also implicated in the differentiation and maturation of dendritic cells and in the suppression of regulatory T (Treg) cells development (PubMed:11244049, PubMed:11846971, PubMed:11846974, PubMed:16932750, PubMed:20049431). Acts as a tumor suppressor and plays a role not only in antagonism of tumor cell growth but also in stimulating an immune response against tumor cells (PubMed:11244049, PubMed:11846971, PubMed:11846974, PubMed:16932750, PubMed:20049431).</text>
</comment>
<comment type="activity regulation">
    <text evidence="10">Activated by MYD88.</text>
</comment>
<comment type="subunit">
    <text evidence="2 8 10 20">Monomer (PubMed:9422515). Homodimer (PubMed:9422515). Interacts with EP300 (By similarity). Interacts with MYD88 (PubMed:17018642). Interacts with PIAS3 (PubMed:12387893). Interacts with SPOP (By similarity).</text>
</comment>
<comment type="interaction">
    <interactant intactId="EBI-6115486">
        <id>P15314</id>
    </interactant>
    <interactant intactId="EBI-751001">
        <id>Q14145</id>
        <label>KEAP1</label>
    </interactant>
    <organismsDiffer>true</organismsDiffer>
    <experiments>2</experiments>
</comment>
<comment type="interaction">
    <interactant intactId="EBI-6115486">
        <id>P15314</id>
    </interactant>
    <interactant intactId="EBI-357631">
        <id>Q13114</id>
        <label>TRAF3</label>
    </interactant>
    <organismsDiffer>true</organismsDiffer>
    <experiments>2</experiments>
</comment>
<comment type="subcellular location">
    <subcellularLocation>
        <location evidence="10 19">Nucleus</location>
    </subcellularLocation>
    <subcellularLocation>
        <location evidence="10">Cytoplasm</location>
    </subcellularLocation>
    <text evidence="10">MYD88-associated IRF1 migrates into the nucleus more efficiently than non-MYD88-associated IRF1.</text>
</comment>
<comment type="induction">
    <text evidence="10 12 18">Induced by IFN-gamma (PubMed:17018642, PubMed:18955028, PubMed:29321274). Induced by influenza A virus (PubMed:29321274).</text>
</comment>
<comment type="PTM">
    <text evidence="2">Phosphorylated by CK2 and this positively regulates its activity.</text>
</comment>
<comment type="PTM">
    <text evidence="2 8 12">Ubiquitinated in a SPOP-depedent manner. Sumoylation represses the transcriptional activity and displays enhanced resistance to protein degradation (PubMed:12387893, PubMed:18955028). Sumoylated by UBE2I/UBC9 and SUMO1 (PubMed:18955028). Inactivates the tumor suppressor activity (By similarity). Elevated levels in tumor cells (By similarity). Major site is Lys-276 (By similarity). Sumoylation is enhanced by PIAS3 (PubMed:12387893). Desumoylated by SENP1 in tumor cells and appears to compete with ubiquitination on C-terminal sites (By similarity).</text>
</comment>
<comment type="PTM">
    <text evidence="2">Ubiquitinated. Appears to compete with sumoylation on C-terminal sites (By similarity).</text>
</comment>
<comment type="similarity">
    <text evidence="3">Belongs to the IRF family.</text>
</comment>
<accession>P15314</accession>
<gene>
    <name type="primary">Irf1</name>
</gene>
<proteinExistence type="evidence at protein level"/>
<keyword id="KW-0002">3D-structure</keyword>
<keyword id="KW-0007">Acetylation</keyword>
<keyword id="KW-0010">Activator</keyword>
<keyword id="KW-0051">Antiviral defense</keyword>
<keyword id="KW-0963">Cytoplasm</keyword>
<keyword id="KW-0238">DNA-binding</keyword>
<keyword id="KW-0391">Immunity</keyword>
<keyword id="KW-0399">Innate immunity</keyword>
<keyword id="KW-1017">Isopeptide bond</keyword>
<keyword id="KW-0539">Nucleus</keyword>
<keyword id="KW-0597">Phosphoprotein</keyword>
<keyword id="KW-1185">Reference proteome</keyword>
<keyword id="KW-0678">Repressor</keyword>
<keyword id="KW-0804">Transcription</keyword>
<keyword id="KW-0805">Transcription regulation</keyword>
<keyword id="KW-0832">Ubl conjugation</keyword>
<evidence type="ECO:0000250" key="1"/>
<evidence type="ECO:0000250" key="2">
    <source>
        <dbReference type="UniProtKB" id="P10914"/>
    </source>
</evidence>
<evidence type="ECO:0000255" key="3">
    <source>
        <dbReference type="PROSITE-ProRule" id="PRU00840"/>
    </source>
</evidence>
<evidence type="ECO:0000256" key="4">
    <source>
        <dbReference type="SAM" id="MobiDB-lite"/>
    </source>
</evidence>
<evidence type="ECO:0000269" key="5">
    <source>
    </source>
</evidence>
<evidence type="ECO:0000269" key="6">
    <source>
    </source>
</evidence>
<evidence type="ECO:0000269" key="7">
    <source>
    </source>
</evidence>
<evidence type="ECO:0000269" key="8">
    <source>
    </source>
</evidence>
<evidence type="ECO:0000269" key="9">
    <source>
    </source>
</evidence>
<evidence type="ECO:0000269" key="10">
    <source>
    </source>
</evidence>
<evidence type="ECO:0000269" key="11">
    <source>
    </source>
</evidence>
<evidence type="ECO:0000269" key="12">
    <source>
    </source>
</evidence>
<evidence type="ECO:0000269" key="13">
    <source>
    </source>
</evidence>
<evidence type="ECO:0000269" key="14">
    <source>
    </source>
</evidence>
<evidence type="ECO:0000269" key="15">
    <source>
    </source>
</evidence>
<evidence type="ECO:0000269" key="16">
    <source>
    </source>
</evidence>
<evidence type="ECO:0000269" key="17">
    <source>
    </source>
</evidence>
<evidence type="ECO:0000269" key="18">
    <source>
    </source>
</evidence>
<evidence type="ECO:0000269" key="19">
    <source>
    </source>
</evidence>
<evidence type="ECO:0000269" key="20">
    <source>
    </source>
</evidence>
<evidence type="ECO:0000303" key="21">
    <source>
    </source>
</evidence>
<evidence type="ECO:0000303" key="22">
    <source>
    </source>
</evidence>
<evidence type="ECO:0000303" key="23">
    <source>
    </source>
</evidence>
<evidence type="ECO:0000303" key="24">
    <source>
    </source>
</evidence>
<evidence type="ECO:0000303" key="25">
    <source>
    </source>
</evidence>
<evidence type="ECO:0007829" key="26">
    <source>
        <dbReference type="PDB" id="1IF1"/>
    </source>
</evidence>
<sequence length="329" mass="37319">MPITRMRMRPWLEMQINSNQIPGLIWINKEEMIFQIPWKHAAKHGWDINKDACLFRSWAIHTGRYKAGEKEPDPKTWKANFRCAMNSLPDIEEVKDQSRNKGSSAVRVYRMLPPLTRNQRKERKSKSSRDTKSKTKRKLCGDVSPDTFSDGLSSSTLPDDHSSYTTQGYLGQDLDMERDITPALSPCVVSSSLSEWHMQMDIIPDSTTDLYNLQVSPMPSTSEAATDEDEEGKIAEDLMKLFEQSEWQPTHIDGKGYLLNEPGTQLSSVYGDFSCKEEPEIDSPRGDIGIGIQHVFTEMKNMDSIMWMDSLLGNSVRLPPSIQAIPCAP</sequence>
<organism>
    <name type="scientific">Mus musculus</name>
    <name type="common">Mouse</name>
    <dbReference type="NCBI Taxonomy" id="10090"/>
    <lineage>
        <taxon>Eukaryota</taxon>
        <taxon>Metazoa</taxon>
        <taxon>Chordata</taxon>
        <taxon>Craniata</taxon>
        <taxon>Vertebrata</taxon>
        <taxon>Euteleostomi</taxon>
        <taxon>Mammalia</taxon>
        <taxon>Eutheria</taxon>
        <taxon>Euarchontoglires</taxon>
        <taxon>Glires</taxon>
        <taxon>Rodentia</taxon>
        <taxon>Myomorpha</taxon>
        <taxon>Muroidea</taxon>
        <taxon>Muridae</taxon>
        <taxon>Murinae</taxon>
        <taxon>Mus</taxon>
        <taxon>Mus</taxon>
    </lineage>
</organism>
<protein>
    <recommendedName>
        <fullName>Interferon regulatory factor 1</fullName>
        <shortName>IRF-1</shortName>
    </recommendedName>
</protein>
<name>IRF1_MOUSE</name>
<feature type="chain" id="PRO_0000154546" description="Interferon regulatory factor 1">
    <location>
        <begin position="1"/>
        <end position="329"/>
    </location>
</feature>
<feature type="DNA-binding region" description="IRF tryptophan pentad repeat" evidence="3">
    <location>
        <begin position="5"/>
        <end position="113"/>
    </location>
</feature>
<feature type="region of interest" description="Disordered" evidence="4">
    <location>
        <begin position="93"/>
        <end position="166"/>
    </location>
</feature>
<feature type="compositionally biased region" description="Polar residues" evidence="4">
    <location>
        <begin position="146"/>
        <end position="166"/>
    </location>
</feature>
<feature type="modified residue" description="N6-acetyllysine" evidence="2">
    <location>
        <position position="78"/>
    </location>
</feature>
<feature type="cross-link" description="Glycyl lysine isopeptide (Lys-Gly) (interchain with G-Cter in SUMO)" evidence="1">
    <location>
        <position position="276"/>
    </location>
</feature>
<feature type="cross-link" description="Glycyl lysine isopeptide (Lys-Gly) (interchain with G-Cter in SUMO)" evidence="1">
    <location>
        <position position="300"/>
    </location>
</feature>
<feature type="helix" evidence="26">
    <location>
        <begin position="12"/>
        <end position="20"/>
    </location>
</feature>
<feature type="strand" evidence="26">
    <location>
        <begin position="21"/>
        <end position="25"/>
    </location>
</feature>
<feature type="strand" evidence="26">
    <location>
        <begin position="29"/>
        <end position="34"/>
    </location>
</feature>
<feature type="turn" evidence="26">
    <location>
        <begin position="48"/>
        <end position="50"/>
    </location>
</feature>
<feature type="strand" evidence="26">
    <location>
        <begin position="51"/>
        <end position="53"/>
    </location>
</feature>
<feature type="helix" evidence="26">
    <location>
        <begin position="54"/>
        <end position="61"/>
    </location>
</feature>
<feature type="helix" evidence="26">
    <location>
        <begin position="74"/>
        <end position="87"/>
    </location>
</feature>
<feature type="strand" evidence="26">
    <location>
        <begin position="89"/>
        <end position="93"/>
    </location>
</feature>
<feature type="strand" evidence="26">
    <location>
        <begin position="100"/>
        <end position="102"/>
    </location>
</feature>
<feature type="strand" evidence="26">
    <location>
        <begin position="107"/>
        <end position="109"/>
    </location>
</feature>